<dbReference type="PIR" id="A26073">
    <property type="entry name" value="PCCT"/>
</dbReference>
<dbReference type="BMRB" id="P06884"/>
<dbReference type="SMR" id="P06884"/>
<dbReference type="FunCoup" id="P06884">
    <property type="interactions" value="10"/>
</dbReference>
<dbReference type="STRING" id="9685.ENSFCAP00000032528"/>
<dbReference type="PaxDb" id="9685-ENSFCAP00000020367"/>
<dbReference type="eggNOG" id="ENOG502TD4B">
    <property type="taxonomic scope" value="Eukaryota"/>
</dbReference>
<dbReference type="HOGENOM" id="CLU_165150_1_0_1"/>
<dbReference type="InParanoid" id="P06884"/>
<dbReference type="Proteomes" id="UP000011712">
    <property type="component" value="Unplaced"/>
</dbReference>
<dbReference type="GO" id="GO:0005576">
    <property type="term" value="C:extracellular region"/>
    <property type="evidence" value="ECO:0007669"/>
    <property type="project" value="UniProtKB-SubCell"/>
</dbReference>
<dbReference type="GO" id="GO:0005179">
    <property type="term" value="F:hormone activity"/>
    <property type="evidence" value="ECO:0007669"/>
    <property type="project" value="UniProtKB-KW"/>
</dbReference>
<dbReference type="CDD" id="cd00126">
    <property type="entry name" value="PAH"/>
    <property type="match status" value="1"/>
</dbReference>
<dbReference type="Gene3D" id="6.10.250.900">
    <property type="match status" value="1"/>
</dbReference>
<dbReference type="InterPro" id="IPR001955">
    <property type="entry name" value="Pancreatic_hormone-like"/>
</dbReference>
<dbReference type="InterPro" id="IPR020392">
    <property type="entry name" value="Pancreatic_hormone-like_CS"/>
</dbReference>
<dbReference type="PANTHER" id="PTHR10533">
    <property type="entry name" value="NEUROPEPTIDE Y/PANCREATIC HORMONE/PEPTIDE YY"/>
    <property type="match status" value="1"/>
</dbReference>
<dbReference type="PANTHER" id="PTHR10533:SF2">
    <property type="entry name" value="PANCREATIC POLYPEPTIDE PROHORMONE"/>
    <property type="match status" value="1"/>
</dbReference>
<dbReference type="Pfam" id="PF00159">
    <property type="entry name" value="Hormone_3"/>
    <property type="match status" value="1"/>
</dbReference>
<dbReference type="PRINTS" id="PR00278">
    <property type="entry name" value="PANCHORMONE"/>
</dbReference>
<dbReference type="SMART" id="SM00309">
    <property type="entry name" value="PAH"/>
    <property type="match status" value="1"/>
</dbReference>
<dbReference type="PROSITE" id="PS00265">
    <property type="entry name" value="PANCREATIC_HORMONE_1"/>
    <property type="match status" value="1"/>
</dbReference>
<dbReference type="PROSITE" id="PS50276">
    <property type="entry name" value="PANCREATIC_HORMONE_2"/>
    <property type="match status" value="1"/>
</dbReference>
<reference key="1">
    <citation type="journal article" date="1986" name="Biochem. J.">
        <title>Cat pancreatic eicosapeptide and its biosynthetic intermediate. Conservation of a monobasic processing site.</title>
        <authorList>
            <person name="Nielsen H.V."/>
            <person name="Gether U."/>
            <person name="Schwartz T.W."/>
        </authorList>
    </citation>
    <scope>PROTEIN SEQUENCE</scope>
    <scope>AMIDATION AT TYR-36</scope>
</reference>
<comment type="function">
    <molecule>Pancreatic polypeptide</molecule>
    <text evidence="1">Hormone secreted by pancreatic cells that acts as a regulator of pancreatic and gastrointestinal functions probably by signaling through the G protein-coupled receptor NPY4R2.</text>
</comment>
<comment type="subcellular location">
    <subcellularLocation>
        <location evidence="1">Secreted</location>
    </subcellularLocation>
</comment>
<comment type="miscellaneous">
    <text>Gly-Lys-Arg at positions 37 to 39 were included by homology with other pancreatic hormone type precursor sequence.</text>
</comment>
<comment type="similarity">
    <text evidence="3">Belongs to the NPY family.</text>
</comment>
<gene>
    <name type="primary">PPY</name>
</gene>
<organism>
    <name type="scientific">Felis catus</name>
    <name type="common">Cat</name>
    <name type="synonym">Felis silvestris catus</name>
    <dbReference type="NCBI Taxonomy" id="9685"/>
    <lineage>
        <taxon>Eukaryota</taxon>
        <taxon>Metazoa</taxon>
        <taxon>Chordata</taxon>
        <taxon>Craniata</taxon>
        <taxon>Vertebrata</taxon>
        <taxon>Euteleostomi</taxon>
        <taxon>Mammalia</taxon>
        <taxon>Eutheria</taxon>
        <taxon>Laurasiatheria</taxon>
        <taxon>Carnivora</taxon>
        <taxon>Feliformia</taxon>
        <taxon>Felidae</taxon>
        <taxon>Felinae</taxon>
        <taxon>Felis</taxon>
    </lineage>
</organism>
<name>PAHO_FELCA</name>
<keyword id="KW-0027">Amidation</keyword>
<keyword id="KW-0903">Direct protein sequencing</keyword>
<keyword id="KW-0372">Hormone</keyword>
<keyword id="KW-1185">Reference proteome</keyword>
<keyword id="KW-0964">Secreted</keyword>
<sequence length="66" mass="7483">APLEPVYPGDNATPEQMAQYAAELRRYINMLTRPRYGKRDRGETLDILEWGSPHAAAPRELSPMDV</sequence>
<evidence type="ECO:0000250" key="1">
    <source>
        <dbReference type="UniProtKB" id="P01298"/>
    </source>
</evidence>
<evidence type="ECO:0000269" key="2">
    <source>
    </source>
</evidence>
<evidence type="ECO:0000305" key="3"/>
<protein>
    <recommendedName>
        <fullName evidence="3">Pancreatic polypeptide prohormone</fullName>
    </recommendedName>
    <component>
        <recommendedName>
            <fullName evidence="1">Pancreatic polypeptide</fullName>
            <shortName evidence="1">PP</shortName>
        </recommendedName>
    </component>
    <component>
        <recommendedName>
            <fullName evidence="1">Pancreatic icosapeptide</fullName>
        </recommendedName>
    </component>
</protein>
<feature type="peptide" id="PRO_0000025363" description="Pancreatic polypeptide">
    <location>
        <begin position="1"/>
        <end position="36"/>
    </location>
</feature>
<feature type="peptide" id="PRO_0000025364" description="Pancreatic icosapeptide">
    <location>
        <begin position="40"/>
        <end position="59"/>
    </location>
</feature>
<feature type="propeptide" id="PRO_0000045868">
    <location>
        <begin position="60"/>
        <end position="66" status="greater than"/>
    </location>
</feature>
<feature type="modified residue" description="Tyrosine amide" evidence="2">
    <location>
        <position position="36"/>
    </location>
</feature>
<feature type="non-terminal residue">
    <location>
        <position position="1"/>
    </location>
</feature>
<feature type="non-terminal residue">
    <location>
        <position position="66"/>
    </location>
</feature>
<accession>P06884</accession>
<proteinExistence type="evidence at protein level"/>